<protein>
    <recommendedName>
        <fullName evidence="8">Histone-like protein Rv3852</fullName>
    </recommendedName>
    <alternativeName>
        <fullName evidence="9">Mycobacterial DNA binding protein 2</fullName>
        <shortName evidence="9">MDP2</shortName>
    </alternativeName>
    <alternativeName>
        <fullName evidence="8">Nucleoid-associated protein</fullName>
        <shortName evidence="8">NAP</shortName>
    </alternativeName>
</protein>
<dbReference type="EMBL" id="AL123456">
    <property type="protein sequence ID" value="CCP46681.1"/>
    <property type="molecule type" value="Genomic_DNA"/>
</dbReference>
<dbReference type="RefSeq" id="NP_218369.1">
    <property type="nucleotide sequence ID" value="NC_000962.3"/>
</dbReference>
<dbReference type="RefSeq" id="WP_003399779.1">
    <property type="nucleotide sequence ID" value="NZ_NVQJ01000057.1"/>
</dbReference>
<dbReference type="SMR" id="I6YHB0"/>
<dbReference type="STRING" id="83332.Rv3852"/>
<dbReference type="PaxDb" id="83332-Rv3852"/>
<dbReference type="DNASU" id="886187"/>
<dbReference type="GeneID" id="45427856"/>
<dbReference type="GeneID" id="886187"/>
<dbReference type="KEGG" id="mtu:Rv3852"/>
<dbReference type="KEGG" id="mtv:RVBD_3852"/>
<dbReference type="PATRIC" id="fig|83332.111.peg.4287"/>
<dbReference type="TubercuList" id="Rv3852"/>
<dbReference type="eggNOG" id="ENOG5031M4N">
    <property type="taxonomic scope" value="Bacteria"/>
</dbReference>
<dbReference type="InParanoid" id="I6YHB0"/>
<dbReference type="PHI-base" id="PHI:7978"/>
<dbReference type="Proteomes" id="UP000001584">
    <property type="component" value="Chromosome"/>
</dbReference>
<dbReference type="GO" id="GO:0005886">
    <property type="term" value="C:plasma membrane"/>
    <property type="evidence" value="ECO:0007669"/>
    <property type="project" value="UniProtKB-SubCell"/>
</dbReference>
<dbReference type="GO" id="GO:0003677">
    <property type="term" value="F:DNA binding"/>
    <property type="evidence" value="ECO:0007669"/>
    <property type="project" value="UniProtKB-KW"/>
</dbReference>
<reference key="1">
    <citation type="journal article" date="1998" name="Nature">
        <title>Deciphering the biology of Mycobacterium tuberculosis from the complete genome sequence.</title>
        <authorList>
            <person name="Cole S.T."/>
            <person name="Brosch R."/>
            <person name="Parkhill J."/>
            <person name="Garnier T."/>
            <person name="Churcher C.M."/>
            <person name="Harris D.E."/>
            <person name="Gordon S.V."/>
            <person name="Eiglmeier K."/>
            <person name="Gas S."/>
            <person name="Barry C.E. III"/>
            <person name="Tekaia F."/>
            <person name="Badcock K."/>
            <person name="Basham D."/>
            <person name="Brown D."/>
            <person name="Chillingworth T."/>
            <person name="Connor R."/>
            <person name="Davies R.M."/>
            <person name="Devlin K."/>
            <person name="Feltwell T."/>
            <person name="Gentles S."/>
            <person name="Hamlin N."/>
            <person name="Holroyd S."/>
            <person name="Hornsby T."/>
            <person name="Jagels K."/>
            <person name="Krogh A."/>
            <person name="McLean J."/>
            <person name="Moule S."/>
            <person name="Murphy L.D."/>
            <person name="Oliver S."/>
            <person name="Osborne J."/>
            <person name="Quail M.A."/>
            <person name="Rajandream M.A."/>
            <person name="Rogers J."/>
            <person name="Rutter S."/>
            <person name="Seeger K."/>
            <person name="Skelton S."/>
            <person name="Squares S."/>
            <person name="Squares R."/>
            <person name="Sulston J.E."/>
            <person name="Taylor K."/>
            <person name="Whitehead S."/>
            <person name="Barrell B.G."/>
        </authorList>
    </citation>
    <scope>NUCLEOTIDE SEQUENCE [LARGE SCALE GENOMIC DNA]</scope>
    <source>
        <strain>ATCC 25618 / H37Rv</strain>
    </source>
</reference>
<reference key="2">
    <citation type="journal article" date="2009" name="Microbiology">
        <title>Identification of Rv3852 as a nucleoid-associated protein in Mycobacterium tuberculosis.</title>
        <authorList>
            <person name="Werlang I.C.R."/>
            <person name="Schneider C.Z."/>
            <person name="Mendonca J.D."/>
            <person name="Palma M.S."/>
            <person name="Basso L.A."/>
            <person name="Santos D.S."/>
        </authorList>
    </citation>
    <scope>PROTEIN SEQUENCE OF N-TERMINUS</scope>
    <scope>FUNCTION</scope>
    <scope>DNA-BINDING</scope>
    <scope>SUBUNIT</scope>
    <source>
        <strain>H37Rv</strain>
    </source>
</reference>
<reference key="3">
    <citation type="journal article" date="2011" name="Mol. Cell. Proteomics">
        <title>Proteogenomic analysis of Mycobacterium tuberculosis by high resolution mass spectrometry.</title>
        <authorList>
            <person name="Kelkar D.S."/>
            <person name="Kumar D."/>
            <person name="Kumar P."/>
            <person name="Balakrishnan L."/>
            <person name="Muthusamy B."/>
            <person name="Yadav A.K."/>
            <person name="Shrivastava P."/>
            <person name="Marimuthu A."/>
            <person name="Anand S."/>
            <person name="Sundaram H."/>
            <person name="Kingsbury R."/>
            <person name="Harsha H.C."/>
            <person name="Nair B."/>
            <person name="Prasad T.S."/>
            <person name="Chauhan D.S."/>
            <person name="Katoch K."/>
            <person name="Katoch V.M."/>
            <person name="Kumar P."/>
            <person name="Chaerkady R."/>
            <person name="Ramachandran S."/>
            <person name="Dash D."/>
            <person name="Pandey A."/>
        </authorList>
    </citation>
    <scope>IDENTIFICATION BY MASS SPECTROMETRY [LARGE SCALE ANALYSIS]</scope>
</reference>
<reference key="4">
    <citation type="journal article" date="2013" name="J. Bacteriol.">
        <title>Regulation of lipid biosynthesis, sliding motility, and biofilm formation by a membrane-anchored nucleoid-associated protein of Mycobacterium tuberculosis.</title>
        <authorList>
            <person name="Ghosh S."/>
            <person name="Indi S.S."/>
            <person name="Nagaraja V."/>
        </authorList>
    </citation>
    <scope>FUNCTION</scope>
    <scope>DNA-BINDING</scope>
    <scope>SUBCELLULAR LOCATION</scope>
    <scope>EXPRESSION IN M.SMEGMATIS</scope>
    <source>
        <strain>H37Rv</strain>
    </source>
</reference>
<reference key="5">
    <citation type="journal article" date="2015" name="PLoS ONE">
        <title>Identification of Rv3852 as an Agrimophol-Binding Protein in Mycobacterium tuberculosis.</title>
        <authorList>
            <person name="Zhao N."/>
            <person name="Sun M."/>
            <person name="Burns-Huang K."/>
            <person name="Jiang X."/>
            <person name="Ling Y."/>
            <person name="Darby C."/>
            <person name="Ehrt S."/>
            <person name="Liu G."/>
            <person name="Nathan C."/>
        </authorList>
    </citation>
    <scope>FUNCTION</scope>
    <scope>DNA-BINDING</scope>
    <scope>ACTIVITY REGULATION</scope>
    <scope>MASS SPECTROMETRY</scope>
    <scope>DISRUPTION PHENOTYPE</scope>
    <source>
        <strain>ATCC 25618 / H37Rv</strain>
    </source>
</reference>
<reference key="6">
    <citation type="journal article" date="2015" name="PLoS ONE">
        <authorList>
            <consortium name="PLOS ONE Staff"/>
        </authorList>
    </citation>
    <scope>ERRATUM OF PUBMED:25978362</scope>
</reference>
<reference key="7">
    <citation type="journal article" date="2017" name="J. Bacteriol.">
        <title>Rv3852 (H-NS) of Mycobacterium tuberculosis Is Not Involved in Nucleoid Compaction and Virulence Regulation.</title>
        <authorList>
            <person name="Odermatt N.T."/>
            <person name="Sala C."/>
            <person name="Benjak A."/>
            <person name="Kolly G.S."/>
            <person name="Vocat A."/>
            <person name="Lupien A."/>
            <person name="Cole S.T."/>
        </authorList>
    </citation>
    <scope>FUNCTION</scope>
    <scope>SUBCELLULAR LOCATION</scope>
    <scope>DEVELOPMENTAL STAGE</scope>
    <scope>DISRUPTION PHENOTYPE</scope>
    <source>
        <strain>H37Rv</strain>
    </source>
</reference>
<reference key="8">
    <citation type="journal article" date="2021" name="Cells">
        <title>Direct Interaction of Polar Scaffolding Protein Wag31 with Nucleoid-Associated Protein Rv3852 Regulates Its Polar Localization.</title>
        <authorList>
            <person name="Garg R."/>
            <person name="Anand C."/>
            <person name="Ganguly S."/>
            <person name="Rao S."/>
            <person name="Verma R."/>
            <person name="Nagaraja V."/>
        </authorList>
    </citation>
    <scope>FUNCTION</scope>
    <scope>INTERACTION WITH WAG31</scope>
    <scope>DISRUPTION PHENOTYPE</scope>
    <source>
        <strain>H37Ra</strain>
        <strain>H37Rv</strain>
    </source>
</reference>
<gene>
    <name evidence="11" type="primary">hns</name>
    <name evidence="11" type="ordered locus">Rv3852</name>
</gene>
<feature type="initiator methionine" description="Removed" evidence="3">
    <location>
        <position position="1"/>
    </location>
</feature>
<feature type="chain" id="PRO_0000461386" description="Histone-like protein Rv3852">
    <location>
        <begin position="2"/>
        <end position="134"/>
    </location>
</feature>
<feature type="transmembrane region" description="Helical" evidence="1">
    <location>
        <begin position="111"/>
        <end position="128"/>
    </location>
</feature>
<feature type="region of interest" description="Disordered" evidence="2">
    <location>
        <begin position="1"/>
        <end position="68"/>
    </location>
</feature>
<feature type="compositionally biased region" description="Basic and acidic residues" evidence="2">
    <location>
        <begin position="1"/>
        <end position="10"/>
    </location>
</feature>
<feature type="compositionally biased region" description="Basic residues" evidence="2">
    <location>
        <begin position="23"/>
        <end position="48"/>
    </location>
</feature>
<sequence length="134" mass="13823">MPDPQDRPDSEPSDASTPPAKKLPAKKAAKKAPARKTPAKKAPAKKTPAKGAKSAPPKPAEAPVSLQQRIETNGQLAAAAKDAAAQAKSTVEGANDALARNASVPAPSHSPVPLIVAVTLSLLALLLIRQLRRR</sequence>
<organism>
    <name type="scientific">Mycobacterium tuberculosis (strain ATCC 25618 / H37Rv)</name>
    <dbReference type="NCBI Taxonomy" id="83332"/>
    <lineage>
        <taxon>Bacteria</taxon>
        <taxon>Bacillati</taxon>
        <taxon>Actinomycetota</taxon>
        <taxon>Actinomycetes</taxon>
        <taxon>Mycobacteriales</taxon>
        <taxon>Mycobacteriaceae</taxon>
        <taxon>Mycobacterium</taxon>
        <taxon>Mycobacterium tuberculosis complex</taxon>
    </lineage>
</organism>
<accession>I6YHB0</accession>
<comment type="function">
    <text evidence="3 4 5 6">Binds DNA in vitro (PubMed:19477901, PubMed:23396914, PubMed:25978362). It has been proposed that Rv3852 plays a role in nucleoid organization and may function as an anchorage to tether the DNA to the membrane (PubMed:23396914). However, it was later shown that it has no influence on nucleoid shape or compaction (PubMed:28559300). It plays no role in virulence and only a minor role in the control of transcription, and does not appear to function as a typical nucleoid-associated protein (PubMed:28559300).</text>
</comment>
<comment type="function">
    <text evidence="7">Interacts with Wag31, an important cell shape and cell wall integrity determinant, and facilitates the localization of Wag31 to the cell poles and the cell wall, thus enabling nascent peptidoglycan synthesis.</text>
</comment>
<comment type="activity regulation">
    <text evidence="5">Can interact directly in vitro with the compound agrimophol, a phloroglucinol from the A.pilosa plant, whose extracts have been used in traditional Chinese medicine to treat pulmonary infections (PubMed:25978362). Interaction with agrimophol leads to disruption of Rv3852's DNA binding function (PubMed:25978362).</text>
</comment>
<comment type="subunit">
    <text evidence="3 7">Homodimer in solution (PubMed:19477901). Is probably able to self-associate in higher oligomers along the DNA molecules (PubMed:19477901). Interacts with the N-terminal region of Wag31 (PubMed:34203111).</text>
</comment>
<comment type="subcellular location">
    <subcellularLocation>
        <location evidence="4 6 10">Cell inner membrane</location>
        <topology evidence="1">Single-pass membrane protein</topology>
    </subcellularLocation>
    <text evidence="6">Not detected in the other subcellular compartments or in the culture supernatant.</text>
</comment>
<comment type="developmental stage">
    <text evidence="6">Predominantly present in the logarithmic growth phase with a decrease in protein abundance in stationary phase.</text>
</comment>
<comment type="mass spectrometry" mass="15860.12" method="MALDI" evidence="5">
    <text>The measured mass includes the mass of an N-terminal hexahistidine tag, the recombinant protein is expressed in E.coli.</text>
</comment>
<comment type="disruption phenotype">
    <text evidence="5 6 7">The deletion mutant displays no growth defect or morphological abnormalities, and shows no difference in nucleoid position or spread (PubMed:28559300). Loss of the gene has no detected influence on the virulence of M.tuberculosis (PubMed:28559300). Absence of the gene disturbs polar localization of Wag31, resulting in disturbed nascent peptidoglycan synthesis (PubMed:34203111). Deletion of the gene does not phenocopy the effect of agrimophol and does not compromise M.tuberculosis survival at the pH levels found in macrophage phagosomes (PubMed:25978362).</text>
</comment>
<comment type="miscellaneous">
    <text evidence="3 4">Cannot complement an E.coli hns knockout mutant (PubMed:19477901, PubMed:23396914). Expression in M.smegmatis results in altered nucleoid morphology, defects in biofilm formation, sliding motility and change in apolar lipid profile (PubMed:23396914).</text>
</comment>
<keyword id="KW-0997">Cell inner membrane</keyword>
<keyword id="KW-1003">Cell membrane</keyword>
<keyword id="KW-0903">Direct protein sequencing</keyword>
<keyword id="KW-0238">DNA-binding</keyword>
<keyword id="KW-0472">Membrane</keyword>
<keyword id="KW-1185">Reference proteome</keyword>
<keyword id="KW-0812">Transmembrane</keyword>
<keyword id="KW-1133">Transmembrane helix</keyword>
<evidence type="ECO:0000255" key="1"/>
<evidence type="ECO:0000256" key="2">
    <source>
        <dbReference type="SAM" id="MobiDB-lite"/>
    </source>
</evidence>
<evidence type="ECO:0000269" key="3">
    <source>
    </source>
</evidence>
<evidence type="ECO:0000269" key="4">
    <source>
    </source>
</evidence>
<evidence type="ECO:0000269" key="5">
    <source>
    </source>
</evidence>
<evidence type="ECO:0000269" key="6">
    <source>
    </source>
</evidence>
<evidence type="ECO:0000269" key="7">
    <source>
    </source>
</evidence>
<evidence type="ECO:0000303" key="8">
    <source>
    </source>
</evidence>
<evidence type="ECO:0000303" key="9">
    <source>
    </source>
</evidence>
<evidence type="ECO:0000305" key="10">
    <source>
    </source>
</evidence>
<evidence type="ECO:0000312" key="11">
    <source>
        <dbReference type="EMBL" id="CCP46681.1"/>
    </source>
</evidence>
<proteinExistence type="evidence at protein level"/>
<name>HNSLK_MYCTU</name>